<name>TRPF_NITHX</name>
<evidence type="ECO:0000255" key="1">
    <source>
        <dbReference type="HAMAP-Rule" id="MF_00135"/>
    </source>
</evidence>
<sequence length="225" mass="23365">MSLIVKICGLSTPATLDVTLQGGADMVGFVFFPPSPRHLDLSRARELGAQVRGRAGKVALTVDADDATLGGIIEALRPDLLQLHGKETVARIREIKRTFGLPIMKAIGIETAGDLAALPGYAAVADRVLFDAHPPKDATRPGGLGVPFDWRLLENLAPGIPFMLSGGLTAGNVDAAVRTTRAGGVDVSSGVESAPGVKDAGMIGDFIRAARAAEINLREATSHVG</sequence>
<dbReference type="EC" id="5.3.1.24" evidence="1"/>
<dbReference type="EMBL" id="CP000319">
    <property type="protein sequence ID" value="ABE60965.1"/>
    <property type="molecule type" value="Genomic_DNA"/>
</dbReference>
<dbReference type="RefSeq" id="WP_011508672.1">
    <property type="nucleotide sequence ID" value="NC_007964.1"/>
</dbReference>
<dbReference type="SMR" id="Q1QS32"/>
<dbReference type="STRING" id="323097.Nham_0064"/>
<dbReference type="KEGG" id="nha:Nham_0064"/>
<dbReference type="eggNOG" id="COG0135">
    <property type="taxonomic scope" value="Bacteria"/>
</dbReference>
<dbReference type="HOGENOM" id="CLU_076364_1_1_5"/>
<dbReference type="OrthoDB" id="9796196at2"/>
<dbReference type="UniPathway" id="UPA00035">
    <property type="reaction ID" value="UER00042"/>
</dbReference>
<dbReference type="Proteomes" id="UP000001953">
    <property type="component" value="Chromosome"/>
</dbReference>
<dbReference type="GO" id="GO:0004640">
    <property type="term" value="F:phosphoribosylanthranilate isomerase activity"/>
    <property type="evidence" value="ECO:0007669"/>
    <property type="project" value="UniProtKB-UniRule"/>
</dbReference>
<dbReference type="GO" id="GO:0000162">
    <property type="term" value="P:L-tryptophan biosynthetic process"/>
    <property type="evidence" value="ECO:0007669"/>
    <property type="project" value="UniProtKB-UniRule"/>
</dbReference>
<dbReference type="CDD" id="cd00405">
    <property type="entry name" value="PRAI"/>
    <property type="match status" value="1"/>
</dbReference>
<dbReference type="Gene3D" id="3.20.20.70">
    <property type="entry name" value="Aldolase class I"/>
    <property type="match status" value="1"/>
</dbReference>
<dbReference type="HAMAP" id="MF_00135">
    <property type="entry name" value="PRAI"/>
    <property type="match status" value="1"/>
</dbReference>
<dbReference type="InterPro" id="IPR013785">
    <property type="entry name" value="Aldolase_TIM"/>
</dbReference>
<dbReference type="InterPro" id="IPR001240">
    <property type="entry name" value="PRAI_dom"/>
</dbReference>
<dbReference type="InterPro" id="IPR011060">
    <property type="entry name" value="RibuloseP-bd_barrel"/>
</dbReference>
<dbReference type="InterPro" id="IPR044643">
    <property type="entry name" value="TrpF_fam"/>
</dbReference>
<dbReference type="NCBIfam" id="NF002295">
    <property type="entry name" value="PRK01222.1-1"/>
    <property type="match status" value="1"/>
</dbReference>
<dbReference type="PANTHER" id="PTHR42894">
    <property type="entry name" value="N-(5'-PHOSPHORIBOSYL)ANTHRANILATE ISOMERASE"/>
    <property type="match status" value="1"/>
</dbReference>
<dbReference type="PANTHER" id="PTHR42894:SF1">
    <property type="entry name" value="N-(5'-PHOSPHORIBOSYL)ANTHRANILATE ISOMERASE"/>
    <property type="match status" value="1"/>
</dbReference>
<dbReference type="Pfam" id="PF00697">
    <property type="entry name" value="PRAI"/>
    <property type="match status" value="1"/>
</dbReference>
<dbReference type="SUPFAM" id="SSF51366">
    <property type="entry name" value="Ribulose-phoshate binding barrel"/>
    <property type="match status" value="1"/>
</dbReference>
<comment type="catalytic activity">
    <reaction evidence="1">
        <text>N-(5-phospho-beta-D-ribosyl)anthranilate = 1-(2-carboxyphenylamino)-1-deoxy-D-ribulose 5-phosphate</text>
        <dbReference type="Rhea" id="RHEA:21540"/>
        <dbReference type="ChEBI" id="CHEBI:18277"/>
        <dbReference type="ChEBI" id="CHEBI:58613"/>
        <dbReference type="EC" id="5.3.1.24"/>
    </reaction>
</comment>
<comment type="pathway">
    <text evidence="1">Amino-acid biosynthesis; L-tryptophan biosynthesis; L-tryptophan from chorismate: step 3/5.</text>
</comment>
<comment type="similarity">
    <text evidence="1">Belongs to the TrpF family.</text>
</comment>
<keyword id="KW-0028">Amino-acid biosynthesis</keyword>
<keyword id="KW-0057">Aromatic amino acid biosynthesis</keyword>
<keyword id="KW-0413">Isomerase</keyword>
<keyword id="KW-1185">Reference proteome</keyword>
<keyword id="KW-0822">Tryptophan biosynthesis</keyword>
<gene>
    <name evidence="1" type="primary">trpF</name>
    <name type="ordered locus">Nham_0064</name>
</gene>
<accession>Q1QS32</accession>
<protein>
    <recommendedName>
        <fullName evidence="1">N-(5'-phosphoribosyl)anthranilate isomerase</fullName>
        <shortName evidence="1">PRAI</shortName>
        <ecNumber evidence="1">5.3.1.24</ecNumber>
    </recommendedName>
</protein>
<organism>
    <name type="scientific">Nitrobacter hamburgensis (strain DSM 10229 / NCIMB 13809 / X14)</name>
    <dbReference type="NCBI Taxonomy" id="323097"/>
    <lineage>
        <taxon>Bacteria</taxon>
        <taxon>Pseudomonadati</taxon>
        <taxon>Pseudomonadota</taxon>
        <taxon>Alphaproteobacteria</taxon>
        <taxon>Hyphomicrobiales</taxon>
        <taxon>Nitrobacteraceae</taxon>
        <taxon>Nitrobacter</taxon>
    </lineage>
</organism>
<feature type="chain" id="PRO_1000018615" description="N-(5'-phosphoribosyl)anthranilate isomerase">
    <location>
        <begin position="1"/>
        <end position="225"/>
    </location>
</feature>
<reference key="1">
    <citation type="submission" date="2006-03" db="EMBL/GenBank/DDBJ databases">
        <title>Complete sequence of chromosome of Nitrobacter hamburgensis X14.</title>
        <authorList>
            <consortium name="US DOE Joint Genome Institute"/>
            <person name="Copeland A."/>
            <person name="Lucas S."/>
            <person name="Lapidus A."/>
            <person name="Barry K."/>
            <person name="Detter J.C."/>
            <person name="Glavina del Rio T."/>
            <person name="Hammon N."/>
            <person name="Israni S."/>
            <person name="Dalin E."/>
            <person name="Tice H."/>
            <person name="Pitluck S."/>
            <person name="Chain P."/>
            <person name="Malfatti S."/>
            <person name="Shin M."/>
            <person name="Vergez L."/>
            <person name="Schmutz J."/>
            <person name="Larimer F."/>
            <person name="Land M."/>
            <person name="Hauser L."/>
            <person name="Kyrpides N."/>
            <person name="Ivanova N."/>
            <person name="Ward B."/>
            <person name="Arp D."/>
            <person name="Klotz M."/>
            <person name="Stein L."/>
            <person name="O'Mullan G."/>
            <person name="Starkenburg S."/>
            <person name="Sayavedra L."/>
            <person name="Poret-Peterson A.T."/>
            <person name="Gentry M.E."/>
            <person name="Bruce D."/>
            <person name="Richardson P."/>
        </authorList>
    </citation>
    <scope>NUCLEOTIDE SEQUENCE [LARGE SCALE GENOMIC DNA]</scope>
    <source>
        <strain>DSM 10229 / NCIMB 13809 / X14</strain>
    </source>
</reference>
<proteinExistence type="inferred from homology"/>